<evidence type="ECO:0000250" key="1">
    <source>
        <dbReference type="UniProtKB" id="Q96NR3"/>
    </source>
</evidence>
<evidence type="ECO:0000255" key="2"/>
<evidence type="ECO:0000255" key="3">
    <source>
        <dbReference type="PROSITE-ProRule" id="PRU00199"/>
    </source>
</evidence>
<evidence type="ECO:0000256" key="4">
    <source>
        <dbReference type="SAM" id="MobiDB-lite"/>
    </source>
</evidence>
<evidence type="ECO:0000305" key="5"/>
<gene>
    <name type="primary">ptchd1</name>
    <name type="ORF">si:ch211-105n9.1</name>
</gene>
<proteinExistence type="inferred from homology"/>
<feature type="chain" id="PRO_0000280042" description="Patched domain-containing protein 1">
    <location>
        <begin position="1"/>
        <end position="897"/>
    </location>
</feature>
<feature type="transmembrane region" description="Helical" evidence="2">
    <location>
        <begin position="25"/>
        <end position="45"/>
    </location>
</feature>
<feature type="transmembrane region" description="Helical" evidence="2">
    <location>
        <begin position="271"/>
        <end position="291"/>
    </location>
</feature>
<feature type="transmembrane region" description="Helical" evidence="2">
    <location>
        <begin position="306"/>
        <end position="326"/>
    </location>
</feature>
<feature type="transmembrane region" description="Helical" evidence="2">
    <location>
        <begin position="335"/>
        <end position="355"/>
    </location>
</feature>
<feature type="transmembrane region" description="Helical" evidence="2">
    <location>
        <begin position="377"/>
        <end position="397"/>
    </location>
</feature>
<feature type="transmembrane region" description="Helical" evidence="2">
    <location>
        <begin position="414"/>
        <end position="434"/>
    </location>
</feature>
<feature type="transmembrane region" description="Helical" evidence="2">
    <location>
        <begin position="506"/>
        <end position="526"/>
    </location>
</feature>
<feature type="transmembrane region" description="Helical" evidence="2">
    <location>
        <begin position="701"/>
        <end position="721"/>
    </location>
</feature>
<feature type="transmembrane region" description="Helical" evidence="2">
    <location>
        <begin position="727"/>
        <end position="747"/>
    </location>
</feature>
<feature type="transmembrane region" description="Helical" evidence="2">
    <location>
        <begin position="754"/>
        <end position="774"/>
    </location>
</feature>
<feature type="transmembrane region" description="Helical" evidence="2">
    <location>
        <begin position="806"/>
        <end position="826"/>
    </location>
</feature>
<feature type="transmembrane region" description="Helical" evidence="2">
    <location>
        <begin position="831"/>
        <end position="851"/>
    </location>
</feature>
<feature type="domain" description="SSD" evidence="3">
    <location>
        <begin position="273"/>
        <end position="433"/>
    </location>
</feature>
<feature type="region of interest" description="Disordered" evidence="4">
    <location>
        <begin position="856"/>
        <end position="881"/>
    </location>
</feature>
<feature type="compositionally biased region" description="Basic residues" evidence="4">
    <location>
        <begin position="856"/>
        <end position="866"/>
    </location>
</feature>
<feature type="compositionally biased region" description="Basic and acidic residues" evidence="4">
    <location>
        <begin position="867"/>
        <end position="881"/>
    </location>
</feature>
<feature type="glycosylation site" description="N-linked (GlcNAc...) asparagine" evidence="2">
    <location>
        <position position="132"/>
    </location>
</feature>
<feature type="glycosylation site" description="N-linked (GlcNAc...) asparagine" evidence="2">
    <location>
        <position position="167"/>
    </location>
</feature>
<feature type="glycosylation site" description="N-linked (GlcNAc...) asparagine" evidence="2">
    <location>
        <position position="179"/>
    </location>
</feature>
<feature type="glycosylation site" description="N-linked (GlcNAc...) asparagine" evidence="2">
    <location>
        <position position="332"/>
    </location>
</feature>
<feature type="glycosylation site" description="N-linked (GlcNAc...) asparagine" evidence="2">
    <location>
        <position position="572"/>
    </location>
</feature>
<feature type="glycosylation site" description="N-linked (GlcNAc...) asparagine" evidence="2">
    <location>
        <position position="603"/>
    </location>
</feature>
<feature type="glycosylation site" description="N-linked (GlcNAc...) asparagine" evidence="2">
    <location>
        <position position="803"/>
    </location>
</feature>
<organism>
    <name type="scientific">Danio rerio</name>
    <name type="common">Zebrafish</name>
    <name type="synonym">Brachydanio rerio</name>
    <dbReference type="NCBI Taxonomy" id="7955"/>
    <lineage>
        <taxon>Eukaryota</taxon>
        <taxon>Metazoa</taxon>
        <taxon>Chordata</taxon>
        <taxon>Craniata</taxon>
        <taxon>Vertebrata</taxon>
        <taxon>Euteleostomi</taxon>
        <taxon>Actinopterygii</taxon>
        <taxon>Neopterygii</taxon>
        <taxon>Teleostei</taxon>
        <taxon>Ostariophysi</taxon>
        <taxon>Cypriniformes</taxon>
        <taxon>Danionidae</taxon>
        <taxon>Danioninae</taxon>
        <taxon>Danio</taxon>
    </lineage>
</organism>
<comment type="function">
    <text evidence="1">Can bind cholesterol in vitro.</text>
</comment>
<comment type="subcellular location">
    <subcellularLocation>
        <location evidence="1">Cell membrane</location>
        <topology evidence="1">Multi-pass membrane protein</topology>
    </subcellularLocation>
    <subcellularLocation>
        <location evidence="1">Cell projection</location>
        <location evidence="1">Dendritic spine</location>
    </subcellularLocation>
</comment>
<comment type="similarity">
    <text evidence="5">Belongs to the patched family.</text>
</comment>
<accession>Q5RIV7</accession>
<protein>
    <recommendedName>
        <fullName>Patched domain-containing protein 1</fullName>
    </recommendedName>
</protein>
<sequence length="897" mass="102383">MLRQVIHRGLKASFYWLGLFVSRHPVFFLTVPAVLTIIFGSTVLSRFKPETDLEILVAPTHSLAKIERSLANSLFPIDQSKHKLYSDLHTPGRYGRLILLARSGGNILELAEQVLQVHKKVLDMRVNYKGFNYTFAHLCVLRHRDKRCLLDDIITIFEDIRLAVLSNSTFSKVPVSYPNTTLKDGRVSFIGHQLGGVALPANNRDQQVKFARAIQITYYLRNLGPVVQDIIAEKWETEFCKLVHQLATDSQELHIQSLTSFSLWRDFHKTGVLAKSEVLVSLVLVLLAATISSSMRDCLRGKPFLGLLGVLTICIANVTAAGIFFISDGKFNSTLLGIPFFAMGHGTKGVFELLAGWRRTRESLPFKERVADAFADVMVCYTMTSSLYIITFGMGASPFTNIESVKVFCQSMCVAVLVNYFYVFSFYGSCLVFAGQLEQNRYHSVFCCKIPSVEYLDRQPTWFKTMMSDGHDLSTHHDSVPYQNHFIQHFLREHYTEWITNTYVKPFVVILYLIYASFSFMGCLQISDGSNIINLLASNSPSVSFALTQQKYFSNYSPVIGFYIYEPIEYWNSTVQEHLKTLGQGFNKISWIDNYFHFLRVVNISASTKSDFISILKTSFLRSPEYQHFVDDIIFSKNGAEYDIIASKMYLVARTTEKTREEVVELLERLRPLSLINSIKFIVFNPTFVFMDRYSSSIISPILTSGFSVLTILILTFFLVINPLGNFWLILTVTSVELGVLGLMTLWNVDMDSISILCLIYTLNFAMDHCAPHLYTFVLATEHTRTQCIKISLEEHGAAILQNTSCFVIGIMPLLFVPSNLTYTLFKCSLLTAGCTVLHCFVILPVFLTFFPPSKKRHKKKKRAKRKEREREREREREREEIECIEVRENPDHVTNV</sequence>
<keyword id="KW-1003">Cell membrane</keyword>
<keyword id="KW-0966">Cell projection</keyword>
<keyword id="KW-0325">Glycoprotein</keyword>
<keyword id="KW-0472">Membrane</keyword>
<keyword id="KW-1185">Reference proteome</keyword>
<keyword id="KW-0770">Synapse</keyword>
<keyword id="KW-0812">Transmembrane</keyword>
<keyword id="KW-1133">Transmembrane helix</keyword>
<name>PTHD1_DANRE</name>
<reference key="1">
    <citation type="journal article" date="2013" name="Nature">
        <title>The zebrafish reference genome sequence and its relationship to the human genome.</title>
        <authorList>
            <person name="Howe K."/>
            <person name="Clark M.D."/>
            <person name="Torroja C.F."/>
            <person name="Torrance J."/>
            <person name="Berthelot C."/>
            <person name="Muffato M."/>
            <person name="Collins J.E."/>
            <person name="Humphray S."/>
            <person name="McLaren K."/>
            <person name="Matthews L."/>
            <person name="McLaren S."/>
            <person name="Sealy I."/>
            <person name="Caccamo M."/>
            <person name="Churcher C."/>
            <person name="Scott C."/>
            <person name="Barrett J.C."/>
            <person name="Koch R."/>
            <person name="Rauch G.J."/>
            <person name="White S."/>
            <person name="Chow W."/>
            <person name="Kilian B."/>
            <person name="Quintais L.T."/>
            <person name="Guerra-Assuncao J.A."/>
            <person name="Zhou Y."/>
            <person name="Gu Y."/>
            <person name="Yen J."/>
            <person name="Vogel J.H."/>
            <person name="Eyre T."/>
            <person name="Redmond S."/>
            <person name="Banerjee R."/>
            <person name="Chi J."/>
            <person name="Fu B."/>
            <person name="Langley E."/>
            <person name="Maguire S.F."/>
            <person name="Laird G.K."/>
            <person name="Lloyd D."/>
            <person name="Kenyon E."/>
            <person name="Donaldson S."/>
            <person name="Sehra H."/>
            <person name="Almeida-King J."/>
            <person name="Loveland J."/>
            <person name="Trevanion S."/>
            <person name="Jones M."/>
            <person name="Quail M."/>
            <person name="Willey D."/>
            <person name="Hunt A."/>
            <person name="Burton J."/>
            <person name="Sims S."/>
            <person name="McLay K."/>
            <person name="Plumb B."/>
            <person name="Davis J."/>
            <person name="Clee C."/>
            <person name="Oliver K."/>
            <person name="Clark R."/>
            <person name="Riddle C."/>
            <person name="Elliot D."/>
            <person name="Threadgold G."/>
            <person name="Harden G."/>
            <person name="Ware D."/>
            <person name="Begum S."/>
            <person name="Mortimore B."/>
            <person name="Kerry G."/>
            <person name="Heath P."/>
            <person name="Phillimore B."/>
            <person name="Tracey A."/>
            <person name="Corby N."/>
            <person name="Dunn M."/>
            <person name="Johnson C."/>
            <person name="Wood J."/>
            <person name="Clark S."/>
            <person name="Pelan S."/>
            <person name="Griffiths G."/>
            <person name="Smith M."/>
            <person name="Glithero R."/>
            <person name="Howden P."/>
            <person name="Barker N."/>
            <person name="Lloyd C."/>
            <person name="Stevens C."/>
            <person name="Harley J."/>
            <person name="Holt K."/>
            <person name="Panagiotidis G."/>
            <person name="Lovell J."/>
            <person name="Beasley H."/>
            <person name="Henderson C."/>
            <person name="Gordon D."/>
            <person name="Auger K."/>
            <person name="Wright D."/>
            <person name="Collins J."/>
            <person name="Raisen C."/>
            <person name="Dyer L."/>
            <person name="Leung K."/>
            <person name="Robertson L."/>
            <person name="Ambridge K."/>
            <person name="Leongamornlert D."/>
            <person name="McGuire S."/>
            <person name="Gilderthorp R."/>
            <person name="Griffiths C."/>
            <person name="Manthravadi D."/>
            <person name="Nichol S."/>
            <person name="Barker G."/>
            <person name="Whitehead S."/>
            <person name="Kay M."/>
            <person name="Brown J."/>
            <person name="Murnane C."/>
            <person name="Gray E."/>
            <person name="Humphries M."/>
            <person name="Sycamore N."/>
            <person name="Barker D."/>
            <person name="Saunders D."/>
            <person name="Wallis J."/>
            <person name="Babbage A."/>
            <person name="Hammond S."/>
            <person name="Mashreghi-Mohammadi M."/>
            <person name="Barr L."/>
            <person name="Martin S."/>
            <person name="Wray P."/>
            <person name="Ellington A."/>
            <person name="Matthews N."/>
            <person name="Ellwood M."/>
            <person name="Woodmansey R."/>
            <person name="Clark G."/>
            <person name="Cooper J."/>
            <person name="Tromans A."/>
            <person name="Grafham D."/>
            <person name="Skuce C."/>
            <person name="Pandian R."/>
            <person name="Andrews R."/>
            <person name="Harrison E."/>
            <person name="Kimberley A."/>
            <person name="Garnett J."/>
            <person name="Fosker N."/>
            <person name="Hall R."/>
            <person name="Garner P."/>
            <person name="Kelly D."/>
            <person name="Bird C."/>
            <person name="Palmer S."/>
            <person name="Gehring I."/>
            <person name="Berger A."/>
            <person name="Dooley C.M."/>
            <person name="Ersan-Urun Z."/>
            <person name="Eser C."/>
            <person name="Geiger H."/>
            <person name="Geisler M."/>
            <person name="Karotki L."/>
            <person name="Kirn A."/>
            <person name="Konantz J."/>
            <person name="Konantz M."/>
            <person name="Oberlander M."/>
            <person name="Rudolph-Geiger S."/>
            <person name="Teucke M."/>
            <person name="Lanz C."/>
            <person name="Raddatz G."/>
            <person name="Osoegawa K."/>
            <person name="Zhu B."/>
            <person name="Rapp A."/>
            <person name="Widaa S."/>
            <person name="Langford C."/>
            <person name="Yang F."/>
            <person name="Schuster S.C."/>
            <person name="Carter N.P."/>
            <person name="Harrow J."/>
            <person name="Ning Z."/>
            <person name="Herrero J."/>
            <person name="Searle S.M."/>
            <person name="Enright A."/>
            <person name="Geisler R."/>
            <person name="Plasterk R.H."/>
            <person name="Lee C."/>
            <person name="Westerfield M."/>
            <person name="de Jong P.J."/>
            <person name="Zon L.I."/>
            <person name="Postlethwait J.H."/>
            <person name="Nusslein-Volhard C."/>
            <person name="Hubbard T.J."/>
            <person name="Roest Crollius H."/>
            <person name="Rogers J."/>
            <person name="Stemple D.L."/>
        </authorList>
    </citation>
    <scope>NUCLEOTIDE SEQUENCE [LARGE SCALE GENOMIC DNA]</scope>
    <source>
        <strain>Tuebingen</strain>
    </source>
</reference>
<dbReference type="EMBL" id="BX088599">
    <property type="protein sequence ID" value="CAI11540.1"/>
    <property type="molecule type" value="Genomic_DNA"/>
</dbReference>
<dbReference type="RefSeq" id="NP_001025356.1">
    <property type="nucleotide sequence ID" value="NM_001030185.1"/>
</dbReference>
<dbReference type="SMR" id="Q5RIV7"/>
<dbReference type="FunCoup" id="Q5RIV7">
    <property type="interactions" value="142"/>
</dbReference>
<dbReference type="STRING" id="7955.ENSDARP00000115181"/>
<dbReference type="GlyCosmos" id="Q5RIV7">
    <property type="glycosylation" value="7 sites, No reported glycans"/>
</dbReference>
<dbReference type="PaxDb" id="7955-ENSDARP00000115181"/>
<dbReference type="Ensembl" id="ENSDART00000146055">
    <property type="protein sequence ID" value="ENSDARP00000115181"/>
    <property type="gene ID" value="ENSDARG00000008249"/>
</dbReference>
<dbReference type="GeneID" id="564097"/>
<dbReference type="KEGG" id="dre:564097"/>
<dbReference type="AGR" id="ZFIN:ZDB-GENE-041001-178"/>
<dbReference type="CTD" id="442213"/>
<dbReference type="ZFIN" id="ZDB-GENE-041001-178">
    <property type="gene designation" value="ptchd4"/>
</dbReference>
<dbReference type="eggNOG" id="KOG1934">
    <property type="taxonomic scope" value="Eukaryota"/>
</dbReference>
<dbReference type="HOGENOM" id="CLU_002359_2_2_1"/>
<dbReference type="InParanoid" id="Q5RIV7"/>
<dbReference type="OMA" id="GHQHTSH"/>
<dbReference type="OrthoDB" id="10027883at2759"/>
<dbReference type="PhylomeDB" id="Q5RIV7"/>
<dbReference type="PRO" id="PR:Q5RIV7"/>
<dbReference type="Proteomes" id="UP000000437">
    <property type="component" value="Chromosome 20"/>
</dbReference>
<dbReference type="Bgee" id="ENSDARG00000008249">
    <property type="expression patterns" value="Expressed in retina and 1 other cell type or tissue"/>
</dbReference>
<dbReference type="GO" id="GO:0043197">
    <property type="term" value="C:dendritic spine"/>
    <property type="evidence" value="ECO:0000250"/>
    <property type="project" value="UniProtKB"/>
</dbReference>
<dbReference type="GO" id="GO:0016020">
    <property type="term" value="C:membrane"/>
    <property type="evidence" value="ECO:0000318"/>
    <property type="project" value="GO_Central"/>
</dbReference>
<dbReference type="GO" id="GO:0005886">
    <property type="term" value="C:plasma membrane"/>
    <property type="evidence" value="ECO:0007669"/>
    <property type="project" value="UniProtKB-SubCell"/>
</dbReference>
<dbReference type="Gene3D" id="1.20.1640.10">
    <property type="entry name" value="Multidrug efflux transporter AcrB transmembrane domain"/>
    <property type="match status" value="2"/>
</dbReference>
<dbReference type="InterPro" id="IPR051697">
    <property type="entry name" value="Patched_domain-protein"/>
</dbReference>
<dbReference type="InterPro" id="IPR003392">
    <property type="entry name" value="PTHD_SSD"/>
</dbReference>
<dbReference type="InterPro" id="IPR000731">
    <property type="entry name" value="SSD"/>
</dbReference>
<dbReference type="PANTHER" id="PTHR10796:SF15">
    <property type="entry name" value="PATCHED DOMAIN-CONTAINING PROTEIN 4"/>
    <property type="match status" value="1"/>
</dbReference>
<dbReference type="PANTHER" id="PTHR10796">
    <property type="entry name" value="PATCHED-RELATED"/>
    <property type="match status" value="1"/>
</dbReference>
<dbReference type="Pfam" id="PF02460">
    <property type="entry name" value="Patched"/>
    <property type="match status" value="1"/>
</dbReference>
<dbReference type="SUPFAM" id="SSF82866">
    <property type="entry name" value="Multidrug efflux transporter AcrB transmembrane domain"/>
    <property type="match status" value="2"/>
</dbReference>
<dbReference type="PROSITE" id="PS50156">
    <property type="entry name" value="SSD"/>
    <property type="match status" value="1"/>
</dbReference>